<feature type="chain" id="PRO_1000091213" description="D-alanine--D-alanine ligase">
    <location>
        <begin position="1"/>
        <end position="396"/>
    </location>
</feature>
<feature type="domain" description="ATP-grasp" evidence="2">
    <location>
        <begin position="141"/>
        <end position="347"/>
    </location>
</feature>
<feature type="region of interest" description="Disordered" evidence="3">
    <location>
        <begin position="374"/>
        <end position="396"/>
    </location>
</feature>
<feature type="binding site" evidence="2">
    <location>
        <begin position="174"/>
        <end position="229"/>
    </location>
    <ligand>
        <name>ATP</name>
        <dbReference type="ChEBI" id="CHEBI:30616"/>
    </ligand>
</feature>
<feature type="binding site" evidence="2">
    <location>
        <position position="301"/>
    </location>
    <ligand>
        <name>Mg(2+)</name>
        <dbReference type="ChEBI" id="CHEBI:18420"/>
        <label>1</label>
    </ligand>
</feature>
<feature type="binding site" evidence="2">
    <location>
        <position position="314"/>
    </location>
    <ligand>
        <name>Mg(2+)</name>
        <dbReference type="ChEBI" id="CHEBI:18420"/>
        <label>1</label>
    </ligand>
</feature>
<feature type="binding site" evidence="2">
    <location>
        <position position="314"/>
    </location>
    <ligand>
        <name>Mg(2+)</name>
        <dbReference type="ChEBI" id="CHEBI:18420"/>
        <label>2</label>
    </ligand>
</feature>
<feature type="binding site" evidence="2">
    <location>
        <position position="316"/>
    </location>
    <ligand>
        <name>Mg(2+)</name>
        <dbReference type="ChEBI" id="CHEBI:18420"/>
        <label>2</label>
    </ligand>
</feature>
<keyword id="KW-0067">ATP-binding</keyword>
<keyword id="KW-0133">Cell shape</keyword>
<keyword id="KW-0961">Cell wall biogenesis/degradation</keyword>
<keyword id="KW-0963">Cytoplasm</keyword>
<keyword id="KW-0436">Ligase</keyword>
<keyword id="KW-0460">Magnesium</keyword>
<keyword id="KW-0464">Manganese</keyword>
<keyword id="KW-0479">Metal-binding</keyword>
<keyword id="KW-0547">Nucleotide-binding</keyword>
<keyword id="KW-0573">Peptidoglycan synthesis</keyword>
<accession>B2S3Q9</accession>
<dbReference type="EC" id="6.3.2.4" evidence="2"/>
<dbReference type="EMBL" id="CP000805">
    <property type="protein sequence ID" value="ACD71088.1"/>
    <property type="molecule type" value="Genomic_DNA"/>
</dbReference>
<dbReference type="RefSeq" id="WP_010882115.1">
    <property type="nucleotide sequence ID" value="NC_021508.1"/>
</dbReference>
<dbReference type="SMR" id="B2S3Q9"/>
<dbReference type="KEGG" id="tpp:TPASS_0670"/>
<dbReference type="PATRIC" id="fig|455434.6.peg.663"/>
<dbReference type="UniPathway" id="UPA00219"/>
<dbReference type="Proteomes" id="UP000001202">
    <property type="component" value="Chromosome"/>
</dbReference>
<dbReference type="GO" id="GO:0005829">
    <property type="term" value="C:cytosol"/>
    <property type="evidence" value="ECO:0007669"/>
    <property type="project" value="TreeGrafter"/>
</dbReference>
<dbReference type="GO" id="GO:0005524">
    <property type="term" value="F:ATP binding"/>
    <property type="evidence" value="ECO:0007669"/>
    <property type="project" value="UniProtKB-KW"/>
</dbReference>
<dbReference type="GO" id="GO:0008716">
    <property type="term" value="F:D-alanine-D-alanine ligase activity"/>
    <property type="evidence" value="ECO:0007669"/>
    <property type="project" value="UniProtKB-UniRule"/>
</dbReference>
<dbReference type="GO" id="GO:0046872">
    <property type="term" value="F:metal ion binding"/>
    <property type="evidence" value="ECO:0007669"/>
    <property type="project" value="UniProtKB-KW"/>
</dbReference>
<dbReference type="GO" id="GO:0071555">
    <property type="term" value="P:cell wall organization"/>
    <property type="evidence" value="ECO:0007669"/>
    <property type="project" value="UniProtKB-KW"/>
</dbReference>
<dbReference type="GO" id="GO:0009252">
    <property type="term" value="P:peptidoglycan biosynthetic process"/>
    <property type="evidence" value="ECO:0007669"/>
    <property type="project" value="UniProtKB-UniRule"/>
</dbReference>
<dbReference type="GO" id="GO:0008360">
    <property type="term" value="P:regulation of cell shape"/>
    <property type="evidence" value="ECO:0007669"/>
    <property type="project" value="UniProtKB-KW"/>
</dbReference>
<dbReference type="FunFam" id="3.30.1490.20:FF:000007">
    <property type="entry name" value="D-alanine--D-alanine ligase"/>
    <property type="match status" value="1"/>
</dbReference>
<dbReference type="Gene3D" id="3.40.50.20">
    <property type="match status" value="1"/>
</dbReference>
<dbReference type="Gene3D" id="3.30.1490.20">
    <property type="entry name" value="ATP-grasp fold, A domain"/>
    <property type="match status" value="1"/>
</dbReference>
<dbReference type="Gene3D" id="3.30.470.20">
    <property type="entry name" value="ATP-grasp fold, B domain"/>
    <property type="match status" value="1"/>
</dbReference>
<dbReference type="HAMAP" id="MF_00047">
    <property type="entry name" value="Dala_Dala_lig"/>
    <property type="match status" value="1"/>
</dbReference>
<dbReference type="InterPro" id="IPR011761">
    <property type="entry name" value="ATP-grasp"/>
</dbReference>
<dbReference type="InterPro" id="IPR013815">
    <property type="entry name" value="ATP_grasp_subdomain_1"/>
</dbReference>
<dbReference type="InterPro" id="IPR000291">
    <property type="entry name" value="D-Ala_lig_Van_CS"/>
</dbReference>
<dbReference type="InterPro" id="IPR005905">
    <property type="entry name" value="D_ala_D_ala"/>
</dbReference>
<dbReference type="InterPro" id="IPR011095">
    <property type="entry name" value="Dala_Dala_lig_C"/>
</dbReference>
<dbReference type="InterPro" id="IPR011127">
    <property type="entry name" value="Dala_Dala_lig_N"/>
</dbReference>
<dbReference type="InterPro" id="IPR016185">
    <property type="entry name" value="PreATP-grasp_dom_sf"/>
</dbReference>
<dbReference type="NCBIfam" id="TIGR01205">
    <property type="entry name" value="D_ala_D_alaTIGR"/>
    <property type="match status" value="1"/>
</dbReference>
<dbReference type="NCBIfam" id="NF002378">
    <property type="entry name" value="PRK01372.1"/>
    <property type="match status" value="1"/>
</dbReference>
<dbReference type="NCBIfam" id="NF002528">
    <property type="entry name" value="PRK01966.1-4"/>
    <property type="match status" value="1"/>
</dbReference>
<dbReference type="PANTHER" id="PTHR23132">
    <property type="entry name" value="D-ALANINE--D-ALANINE LIGASE"/>
    <property type="match status" value="1"/>
</dbReference>
<dbReference type="PANTHER" id="PTHR23132:SF25">
    <property type="entry name" value="D-ALANINE--D-ALANINE LIGASE A"/>
    <property type="match status" value="1"/>
</dbReference>
<dbReference type="Pfam" id="PF07478">
    <property type="entry name" value="Dala_Dala_lig_C"/>
    <property type="match status" value="1"/>
</dbReference>
<dbReference type="Pfam" id="PF01820">
    <property type="entry name" value="Dala_Dala_lig_N"/>
    <property type="match status" value="1"/>
</dbReference>
<dbReference type="PIRSF" id="PIRSF039102">
    <property type="entry name" value="Ddl/VanB"/>
    <property type="match status" value="1"/>
</dbReference>
<dbReference type="SUPFAM" id="SSF56059">
    <property type="entry name" value="Glutathione synthetase ATP-binding domain-like"/>
    <property type="match status" value="1"/>
</dbReference>
<dbReference type="SUPFAM" id="SSF52440">
    <property type="entry name" value="PreATP-grasp domain"/>
    <property type="match status" value="1"/>
</dbReference>
<dbReference type="PROSITE" id="PS50975">
    <property type="entry name" value="ATP_GRASP"/>
    <property type="match status" value="1"/>
</dbReference>
<dbReference type="PROSITE" id="PS00843">
    <property type="entry name" value="DALA_DALA_LIGASE_1"/>
    <property type="match status" value="1"/>
</dbReference>
<dbReference type="PROSITE" id="PS00844">
    <property type="entry name" value="DALA_DALA_LIGASE_2"/>
    <property type="match status" value="1"/>
</dbReference>
<reference key="1">
    <citation type="journal article" date="2008" name="BMC Microbiol.">
        <title>Complete genome sequence of Treponema pallidum ssp. pallidum strain SS14 determined with oligonucleotide arrays.</title>
        <authorList>
            <person name="Matejkova P."/>
            <person name="Strouhal M."/>
            <person name="Smajs D."/>
            <person name="Norris S.J."/>
            <person name="Palzkill T."/>
            <person name="Petrosino J.F."/>
            <person name="Sodergren E."/>
            <person name="Norton J.E."/>
            <person name="Singh J."/>
            <person name="Richmond T.A."/>
            <person name="Molla M.N."/>
            <person name="Albert T.J."/>
            <person name="Weinstock G.M."/>
        </authorList>
    </citation>
    <scope>NUCLEOTIDE SEQUENCE [LARGE SCALE GENOMIC DNA]</scope>
    <source>
        <strain>SS14</strain>
    </source>
</reference>
<proteinExistence type="inferred from homology"/>
<organism>
    <name type="scientific">Treponema pallidum subsp. pallidum (strain SS14)</name>
    <dbReference type="NCBI Taxonomy" id="455434"/>
    <lineage>
        <taxon>Bacteria</taxon>
        <taxon>Pseudomonadati</taxon>
        <taxon>Spirochaetota</taxon>
        <taxon>Spirochaetia</taxon>
        <taxon>Spirochaetales</taxon>
        <taxon>Treponemataceae</taxon>
        <taxon>Treponema</taxon>
    </lineage>
</organism>
<evidence type="ECO:0000250" key="1"/>
<evidence type="ECO:0000255" key="2">
    <source>
        <dbReference type="HAMAP-Rule" id="MF_00047"/>
    </source>
</evidence>
<evidence type="ECO:0000256" key="3">
    <source>
        <dbReference type="SAM" id="MobiDB-lite"/>
    </source>
</evidence>
<comment type="function">
    <text evidence="2">Cell wall formation.</text>
</comment>
<comment type="catalytic activity">
    <reaction evidence="2">
        <text>2 D-alanine + ATP = D-alanyl-D-alanine + ADP + phosphate + H(+)</text>
        <dbReference type="Rhea" id="RHEA:11224"/>
        <dbReference type="ChEBI" id="CHEBI:15378"/>
        <dbReference type="ChEBI" id="CHEBI:30616"/>
        <dbReference type="ChEBI" id="CHEBI:43474"/>
        <dbReference type="ChEBI" id="CHEBI:57416"/>
        <dbReference type="ChEBI" id="CHEBI:57822"/>
        <dbReference type="ChEBI" id="CHEBI:456216"/>
        <dbReference type="EC" id="6.3.2.4"/>
    </reaction>
</comment>
<comment type="cofactor">
    <cofactor evidence="1">
        <name>Mg(2+)</name>
        <dbReference type="ChEBI" id="CHEBI:18420"/>
    </cofactor>
    <cofactor evidence="1">
        <name>Mn(2+)</name>
        <dbReference type="ChEBI" id="CHEBI:29035"/>
    </cofactor>
    <text evidence="1">Binds 2 magnesium or manganese ions per subunit.</text>
</comment>
<comment type="pathway">
    <text evidence="2">Cell wall biogenesis; peptidoglycan biosynthesis.</text>
</comment>
<comment type="subcellular location">
    <subcellularLocation>
        <location evidence="2">Cytoplasm</location>
    </subcellularLocation>
</comment>
<comment type="similarity">
    <text evidence="2">Belongs to the D-alanine--D-alanine ligase family.</text>
</comment>
<sequence>MVHVTLLYGGRSAEHDVSVRSARFVARTLCLQHTVMLIGITRRGVWYAQPACALEQLCTGTVALSIQEDEKRRVCLVPGGGTAGAFVIAGMPCVTDVVFPVLHGSYGEDGTVQGLLEMLQVPYVGCGVCASALAMDKVKAKMLWQAAGLPVLPFVFFRKDAWRMHMQEFVAQLETRLGYPLFVKPAQAGSSVGASAVQTRAPLIPAIEAAFQWDEVVLVERYVRAREIECALSGNGPYTVHGAGEVIAQGAFYDYEEKYADASVARVLVTAPLETAQYEQITTLALRAYEALGLTGLARVDFFLLETGEVYVNEVNTMPGFTSISLFPQICQAAGVAPQDLMAQLLSCARERFAARAALSTDLHAHVCAPSVTAAHDPDAQGDDWDQRDSNPLPTA</sequence>
<name>DDL_TREPS</name>
<protein>
    <recommendedName>
        <fullName evidence="2">D-alanine--D-alanine ligase</fullName>
        <ecNumber evidence="2">6.3.2.4</ecNumber>
    </recommendedName>
    <alternativeName>
        <fullName evidence="2">D-Ala-D-Ala ligase</fullName>
    </alternativeName>
    <alternativeName>
        <fullName evidence="2">D-alanylalanine synthetase</fullName>
    </alternativeName>
</protein>
<gene>
    <name evidence="2" type="primary">ddl</name>
    <name type="ordered locus">TPASS_0670</name>
</gene>